<organism>
    <name type="scientific">Saccharomyces cerevisiae (strain ATCC 204508 / S288c)</name>
    <name type="common">Baker's yeast</name>
    <dbReference type="NCBI Taxonomy" id="559292"/>
    <lineage>
        <taxon>Eukaryota</taxon>
        <taxon>Fungi</taxon>
        <taxon>Dikarya</taxon>
        <taxon>Ascomycota</taxon>
        <taxon>Saccharomycotina</taxon>
        <taxon>Saccharomycetes</taxon>
        <taxon>Saccharomycetales</taxon>
        <taxon>Saccharomycetaceae</taxon>
        <taxon>Saccharomyces</taxon>
    </lineage>
</organism>
<reference key="1">
    <citation type="journal article" date="1994" name="Science">
        <title>Complete nucleotide sequence of Saccharomyces cerevisiae chromosome VIII.</title>
        <authorList>
            <person name="Johnston M."/>
            <person name="Andrews S."/>
            <person name="Brinkman R."/>
            <person name="Cooper J."/>
            <person name="Ding H."/>
            <person name="Dover J."/>
            <person name="Du Z."/>
            <person name="Favello A."/>
            <person name="Fulton L."/>
            <person name="Gattung S."/>
            <person name="Geisel C."/>
            <person name="Kirsten J."/>
            <person name="Kucaba T."/>
            <person name="Hillier L.W."/>
            <person name="Jier M."/>
            <person name="Johnston L."/>
            <person name="Langston Y."/>
            <person name="Latreille P."/>
            <person name="Louis E.J."/>
            <person name="Macri C."/>
            <person name="Mardis E."/>
            <person name="Menezes S."/>
            <person name="Mouser L."/>
            <person name="Nhan M."/>
            <person name="Rifkin L."/>
            <person name="Riles L."/>
            <person name="St Peter H."/>
            <person name="Trevaskis E."/>
            <person name="Vaughan K."/>
            <person name="Vignati D."/>
            <person name="Wilcox L."/>
            <person name="Wohldman P."/>
            <person name="Waterston R."/>
            <person name="Wilson R."/>
            <person name="Vaudin M."/>
        </authorList>
    </citation>
    <scope>NUCLEOTIDE SEQUENCE [LARGE SCALE GENOMIC DNA]</scope>
    <source>
        <strain>ATCC 204508 / S288c</strain>
    </source>
</reference>
<reference key="2">
    <citation type="journal article" date="2014" name="G3 (Bethesda)">
        <title>The reference genome sequence of Saccharomyces cerevisiae: Then and now.</title>
        <authorList>
            <person name="Engel S.R."/>
            <person name="Dietrich F.S."/>
            <person name="Fisk D.G."/>
            <person name="Binkley G."/>
            <person name="Balakrishnan R."/>
            <person name="Costanzo M.C."/>
            <person name="Dwight S.S."/>
            <person name="Hitz B.C."/>
            <person name="Karra K."/>
            <person name="Nash R.S."/>
            <person name="Weng S."/>
            <person name="Wong E.D."/>
            <person name="Lloyd P."/>
            <person name="Skrzypek M.S."/>
            <person name="Miyasato S.R."/>
            <person name="Simison M."/>
            <person name="Cherry J.M."/>
        </authorList>
    </citation>
    <scope>GENOME REANNOTATION</scope>
    <source>
        <strain>ATCC 204508 / S288c</strain>
    </source>
</reference>
<reference key="3">
    <citation type="journal article" date="2002" name="Genes Dev.">
        <title>Subcellular localization of the yeast proteome.</title>
        <authorList>
            <person name="Kumar A."/>
            <person name="Agarwal S."/>
            <person name="Heyman J.A."/>
            <person name="Matson S."/>
            <person name="Heidtman M."/>
            <person name="Piccirillo S."/>
            <person name="Umansky L."/>
            <person name="Drawid A."/>
            <person name="Jansen R."/>
            <person name="Liu Y."/>
            <person name="Cheung K.-H."/>
            <person name="Miller P."/>
            <person name="Gerstein M."/>
            <person name="Roeder G.S."/>
            <person name="Snyder M."/>
        </authorList>
    </citation>
    <scope>SUBCELLULAR LOCATION [LARGE SCALE ANALYSIS]</scope>
</reference>
<reference key="4">
    <citation type="journal article" date="2003" name="Nature">
        <title>Global analysis of protein localization in budding yeast.</title>
        <authorList>
            <person name="Huh W.-K."/>
            <person name="Falvo J.V."/>
            <person name="Gerke L.C."/>
            <person name="Carroll A.S."/>
            <person name="Howson R.W."/>
            <person name="Weissman J.S."/>
            <person name="O'Shea E.K."/>
        </authorList>
    </citation>
    <scope>SUBCELLULAR LOCATION [LARGE SCALE ANALYSIS]</scope>
</reference>
<reference key="5">
    <citation type="journal article" date="2003" name="Nature">
        <title>Global analysis of protein expression in yeast.</title>
        <authorList>
            <person name="Ghaemmaghami S."/>
            <person name="Huh W.-K."/>
            <person name="Bower K."/>
            <person name="Howson R.W."/>
            <person name="Belle A."/>
            <person name="Dephoure N."/>
            <person name="O'Shea E.K."/>
            <person name="Weissman J.S."/>
        </authorList>
    </citation>
    <scope>LEVEL OF PROTEIN EXPRESSION [LARGE SCALE ANALYSIS]</scope>
</reference>
<reference key="6">
    <citation type="journal article" date="2006" name="FEBS J.">
        <title>Identification of yeast aspartyl aminopeptidase gene by purifying and characterizing its product from yeast cells.</title>
        <authorList>
            <person name="Yokoyama R."/>
            <person name="Kawasaki H."/>
            <person name="Hirano H."/>
        </authorList>
    </citation>
    <scope>IDENTIFICATION BY MASS SPECTROMETRY</scope>
    <scope>FUNCTION</scope>
    <scope>BIOPHYSICOCHEMICAL PROPERTIES</scope>
    <scope>SUBUNIT</scope>
    <scope>ACTIVITY REGULATION</scope>
</reference>
<reference key="7">
    <citation type="journal article" date="2007" name="FEBS J.">
        <title>Analysis of the vacuolar luminal proteome of Saccharomyces cerevisiae.</title>
        <authorList>
            <person name="Sarry J.E."/>
            <person name="Chen S."/>
            <person name="Collum R.P."/>
            <person name="Liang S."/>
            <person name="Peng M."/>
            <person name="Lang A."/>
            <person name="Naumann B."/>
            <person name="Dzierszinski F."/>
            <person name="Yuan C.X."/>
            <person name="Hippler M."/>
            <person name="Rea P.A."/>
        </authorList>
    </citation>
    <scope>IDENTIFICATION BY MASS SPECTROMETRY</scope>
    <scope>SUBCELLULAR LOCATION</scope>
</reference>
<reference key="8">
    <citation type="journal article" date="2011" name="J. Biol. Chem.">
        <title>Aspartyl aminopeptidase is imported from the cytoplasm to the vacuole by selective autophagy in Saccharomyces cerevisiae.</title>
        <authorList>
            <person name="Yuga M."/>
            <person name="Gomi K."/>
            <person name="Klionsky D.J."/>
            <person name="Shintani T."/>
        </authorList>
    </citation>
    <scope>SUBCELLULAR LOCATION</scope>
    <scope>INTERACTION WITH ATG19</scope>
</reference>
<dbReference type="EC" id="3.4.11.21" evidence="3"/>
<dbReference type="EMBL" id="U00059">
    <property type="protein sequence ID" value="AAB68851.1"/>
    <property type="molecule type" value="Genomic_DNA"/>
</dbReference>
<dbReference type="EMBL" id="BK006934">
    <property type="protein sequence ID" value="DAA06807.1"/>
    <property type="molecule type" value="Genomic_DNA"/>
</dbReference>
<dbReference type="PIR" id="S48955">
    <property type="entry name" value="S48955"/>
</dbReference>
<dbReference type="RefSeq" id="NP_011981.1">
    <property type="nucleotide sequence ID" value="NM_001179243.1"/>
</dbReference>
<dbReference type="SMR" id="P38821"/>
<dbReference type="BioGRID" id="36546">
    <property type="interactions" value="79"/>
</dbReference>
<dbReference type="DIP" id="DIP-2097N"/>
<dbReference type="FunCoup" id="P38821">
    <property type="interactions" value="719"/>
</dbReference>
<dbReference type="IntAct" id="P38821">
    <property type="interactions" value="30"/>
</dbReference>
<dbReference type="STRING" id="4932.YHR113W"/>
<dbReference type="iPTMnet" id="P38821"/>
<dbReference type="PaxDb" id="4932-YHR113W"/>
<dbReference type="PeptideAtlas" id="P38821"/>
<dbReference type="TopDownProteomics" id="P38821"/>
<dbReference type="DNASU" id="856513"/>
<dbReference type="EnsemblFungi" id="YHR113W_mRNA">
    <property type="protein sequence ID" value="YHR113W"/>
    <property type="gene ID" value="YHR113W"/>
</dbReference>
<dbReference type="GeneID" id="856513"/>
<dbReference type="KEGG" id="sce:YHR113W"/>
<dbReference type="AGR" id="SGD:S000001155"/>
<dbReference type="SGD" id="S000001155">
    <property type="gene designation" value="APE4"/>
</dbReference>
<dbReference type="VEuPathDB" id="FungiDB:YHR113W"/>
<dbReference type="eggNOG" id="KOG2596">
    <property type="taxonomic scope" value="Eukaryota"/>
</dbReference>
<dbReference type="HOGENOM" id="CLU_019532_2_0_1"/>
<dbReference type="InParanoid" id="P38821"/>
<dbReference type="OMA" id="GPILKVN"/>
<dbReference type="OrthoDB" id="9880441at2759"/>
<dbReference type="BioCyc" id="YEAST:G3O-31155-MONOMER"/>
<dbReference type="BioGRID-ORCS" id="856513">
    <property type="hits" value="3 hits in 10 CRISPR screens"/>
</dbReference>
<dbReference type="PRO" id="PR:P38821"/>
<dbReference type="Proteomes" id="UP000002311">
    <property type="component" value="Chromosome VIII"/>
</dbReference>
<dbReference type="RNAct" id="P38821">
    <property type="molecule type" value="protein"/>
</dbReference>
<dbReference type="GO" id="GO:0005737">
    <property type="term" value="C:cytoplasm"/>
    <property type="evidence" value="ECO:0007005"/>
    <property type="project" value="SGD"/>
</dbReference>
<dbReference type="GO" id="GO:0000324">
    <property type="term" value="C:fungal-type vacuole"/>
    <property type="evidence" value="ECO:0000318"/>
    <property type="project" value="GO_Central"/>
</dbReference>
<dbReference type="GO" id="GO:0000328">
    <property type="term" value="C:fungal-type vacuole lumen"/>
    <property type="evidence" value="ECO:0000314"/>
    <property type="project" value="SGD"/>
</dbReference>
<dbReference type="GO" id="GO:0004177">
    <property type="term" value="F:aminopeptidase activity"/>
    <property type="evidence" value="ECO:0000314"/>
    <property type="project" value="SGD"/>
</dbReference>
<dbReference type="GO" id="GO:0070006">
    <property type="term" value="F:metalloaminopeptidase activity"/>
    <property type="evidence" value="ECO:0000318"/>
    <property type="project" value="GO_Central"/>
</dbReference>
<dbReference type="GO" id="GO:0008270">
    <property type="term" value="F:zinc ion binding"/>
    <property type="evidence" value="ECO:0007669"/>
    <property type="project" value="InterPro"/>
</dbReference>
<dbReference type="GO" id="GO:0006508">
    <property type="term" value="P:proteolysis"/>
    <property type="evidence" value="ECO:0000314"/>
    <property type="project" value="SGD"/>
</dbReference>
<dbReference type="CDD" id="cd05658">
    <property type="entry name" value="M18_DAP"/>
    <property type="match status" value="1"/>
</dbReference>
<dbReference type="FunFam" id="2.30.250.10:FF:000001">
    <property type="entry name" value="Aspartyl aminopeptidase 1"/>
    <property type="match status" value="1"/>
</dbReference>
<dbReference type="Gene3D" id="2.30.250.10">
    <property type="entry name" value="Aminopeptidase i, Domain 2"/>
    <property type="match status" value="1"/>
</dbReference>
<dbReference type="Gene3D" id="3.40.630.10">
    <property type="entry name" value="Zn peptidases"/>
    <property type="match status" value="1"/>
</dbReference>
<dbReference type="InterPro" id="IPR001948">
    <property type="entry name" value="Peptidase_M18"/>
</dbReference>
<dbReference type="InterPro" id="IPR023358">
    <property type="entry name" value="Peptidase_M18_dom2"/>
</dbReference>
<dbReference type="NCBIfam" id="NF002759">
    <property type="entry name" value="PRK02813.1"/>
    <property type="match status" value="1"/>
</dbReference>
<dbReference type="PANTHER" id="PTHR28570">
    <property type="entry name" value="ASPARTYL AMINOPEPTIDASE"/>
    <property type="match status" value="1"/>
</dbReference>
<dbReference type="PANTHER" id="PTHR28570:SF3">
    <property type="entry name" value="ASPARTYL AMINOPEPTIDASE"/>
    <property type="match status" value="1"/>
</dbReference>
<dbReference type="Pfam" id="PF02127">
    <property type="entry name" value="Peptidase_M18"/>
    <property type="match status" value="1"/>
</dbReference>
<dbReference type="PRINTS" id="PR00932">
    <property type="entry name" value="AMINO1PTASE"/>
</dbReference>
<dbReference type="SUPFAM" id="SSF101821">
    <property type="entry name" value="Aminopeptidase/glucanase lid domain"/>
    <property type="match status" value="1"/>
</dbReference>
<dbReference type="SUPFAM" id="SSF53187">
    <property type="entry name" value="Zn-dependent exopeptidases"/>
    <property type="match status" value="1"/>
</dbReference>
<accession>P38821</accession>
<accession>D3DL63</accession>
<gene>
    <name type="primary">APE4</name>
    <name type="ordered locus">YHR113W</name>
</gene>
<protein>
    <recommendedName>
        <fullName>Aspartyl aminopeptidase 4</fullName>
        <ecNumber evidence="3">3.4.11.21</ecNumber>
    </recommendedName>
</protein>
<comment type="function">
    <text evidence="3">Aspartyl aminopeptidase that contributes to peptide degradation both in the cytosol and the vacuole. Cells may respond to environmental conditions by changing the distributions of the cytosolic enzyme to the vacuole when cells need more active vacuolar degradation.</text>
</comment>
<comment type="catalytic activity">
    <reaction evidence="3">
        <text>Release of an N-terminal aspartate or glutamate from a peptide, with a preference for aspartate.</text>
        <dbReference type="EC" id="3.4.11.21"/>
    </reaction>
</comment>
<comment type="cofactor">
    <cofactor evidence="1">
        <name>Zn(2+)</name>
        <dbReference type="ChEBI" id="CHEBI:29105"/>
    </cofactor>
    <text evidence="1">Binds 2 Zn(2+) ions per subunit.</text>
</comment>
<comment type="activity regulation">
    <text evidence="3">The metalloproteases inhibitors EDTA and 1.10-phenanthroline both inhibit the activity, whereas bestatin, an inhibitor of most aminopeptidases, does not affect enzyme activity.</text>
</comment>
<comment type="biophysicochemical properties">
    <kinetics>
        <KM evidence="3">64 uM for angiotensin I</KM>
    </kinetics>
    <phDependence>
        <text evidence="3">Optimum pH is 7.5-7.9.</text>
    </phDependence>
</comment>
<comment type="subunit">
    <text evidence="3">Tetrahedron-shaped homododecamer built from six homodimers.</text>
</comment>
<comment type="subcellular location">
    <subcellularLocation>
        <location evidence="5">Cytoplasm</location>
    </subcellularLocation>
    <subcellularLocation>
        <location evidence="4 5">Vacuole lumen</location>
    </subcellularLocation>
    <text evidence="5">In growing conditions, a small portion localizes in the vacuole, but actively transported to the vacuole under nutrient starvation conditions.</text>
</comment>
<comment type="miscellaneous">
    <text evidence="2">Present with 172 molecules/cell in log phase SD medium.</text>
</comment>
<comment type="similarity">
    <text evidence="6">Belongs to the peptidase M18 family.</text>
</comment>
<feature type="chain" id="PRO_0000173455" description="Aspartyl aminopeptidase 4">
    <location>
        <begin position="1"/>
        <end position="490"/>
    </location>
</feature>
<feature type="binding site" evidence="1">
    <location>
        <position position="97"/>
    </location>
    <ligand>
        <name>Zn(2+)</name>
        <dbReference type="ChEBI" id="CHEBI:29105"/>
        <label>1</label>
    </ligand>
</feature>
<feature type="binding site" evidence="1">
    <location>
        <position position="173"/>
    </location>
    <ligand>
        <name>substrate</name>
    </ligand>
</feature>
<feature type="binding site" evidence="1">
    <location>
        <position position="273"/>
    </location>
    <ligand>
        <name>Zn(2+)</name>
        <dbReference type="ChEBI" id="CHEBI:29105"/>
        <label>1</label>
    </ligand>
</feature>
<feature type="binding site" evidence="1">
    <location>
        <position position="273"/>
    </location>
    <ligand>
        <name>Zn(2+)</name>
        <dbReference type="ChEBI" id="CHEBI:29105"/>
        <label>2</label>
    </ligand>
</feature>
<feature type="binding site" evidence="1">
    <location>
        <position position="308"/>
    </location>
    <ligand>
        <name>substrate</name>
    </ligand>
</feature>
<feature type="binding site" evidence="1">
    <location>
        <position position="308"/>
    </location>
    <ligand>
        <name>Zn(2+)</name>
        <dbReference type="ChEBI" id="CHEBI:29105"/>
        <label>1</label>
    </ligand>
</feature>
<feature type="binding site" evidence="1">
    <location>
        <position position="309"/>
    </location>
    <ligand>
        <name>Zn(2+)</name>
        <dbReference type="ChEBI" id="CHEBI:29105"/>
        <label>1</label>
    </ligand>
</feature>
<feature type="binding site" evidence="1">
    <location>
        <position position="309"/>
    </location>
    <ligand>
        <name>Zn(2+)</name>
        <dbReference type="ChEBI" id="CHEBI:29105"/>
        <label>2</label>
    </ligand>
</feature>
<feature type="binding site" evidence="1">
    <location>
        <position position="362"/>
    </location>
    <ligand>
        <name>substrate</name>
    </ligand>
</feature>
<feature type="binding site" evidence="1">
    <location>
        <position position="362"/>
    </location>
    <ligand>
        <name>Zn(2+)</name>
        <dbReference type="ChEBI" id="CHEBI:29105"/>
        <label>1</label>
    </ligand>
</feature>
<feature type="binding site" evidence="1">
    <location>
        <position position="365"/>
    </location>
    <ligand>
        <name>substrate</name>
    </ligand>
</feature>
<feature type="binding site" evidence="1">
    <location>
        <position position="390"/>
    </location>
    <ligand>
        <name>substrate</name>
    </ligand>
</feature>
<feature type="binding site" evidence="1">
    <location>
        <position position="397"/>
    </location>
    <ligand>
        <name>substrate</name>
    </ligand>
</feature>
<feature type="binding site" evidence="1">
    <location>
        <position position="456"/>
    </location>
    <ligand>
        <name>Zn(2+)</name>
        <dbReference type="ChEBI" id="CHEBI:29105"/>
        <label>2</label>
    </ligand>
</feature>
<keyword id="KW-0031">Aminopeptidase</keyword>
<keyword id="KW-0963">Cytoplasm</keyword>
<keyword id="KW-0378">Hydrolase</keyword>
<keyword id="KW-0479">Metal-binding</keyword>
<keyword id="KW-0482">Metalloprotease</keyword>
<keyword id="KW-0645">Protease</keyword>
<keyword id="KW-1185">Reference proteome</keyword>
<keyword id="KW-0926">Vacuole</keyword>
<keyword id="KW-0862">Zinc</keyword>
<evidence type="ECO:0000250" key="1">
    <source>
        <dbReference type="UniProtKB" id="Q9ULA0"/>
    </source>
</evidence>
<evidence type="ECO:0000269" key="2">
    <source>
    </source>
</evidence>
<evidence type="ECO:0000269" key="3">
    <source>
    </source>
</evidence>
<evidence type="ECO:0000269" key="4">
    <source>
    </source>
</evidence>
<evidence type="ECO:0000269" key="5">
    <source>
    </source>
</evidence>
<evidence type="ECO:0000305" key="6"/>
<name>DNPEP_YEAST</name>
<proteinExistence type="evidence at protein level"/>
<sequence length="490" mass="54174">MFRIQLRTMSSKTCKSDYPKEFVSFLNSSHSPYHTVHNIKKHLVSNGFKELSERDSWAGHVAQKGKYFVTRNGSSIIAFAVGGKWEPGNPIAITGAHTDSPALRIKPISKRVSEKYLQVGVETYGGAIWHSWFDKDLGVAGRVFVKDAKTGKSIARLVDLNRPLLKIPTLAIHLDRDVNQKFEFNRETQLLPIGGLQEDKTEAKTEKEINNGEFTSIKTIVQRHHAELLGLIAKELAIDTIEDIEDFELILYDHNASTLGGFNDEFVFSGRLDNLTSCFTSMHGLTLAADTEIDRESGIRLMACFDHEEIGSSSAQGADSNFLPNILERLSILKGDGSDQTKPLFHSAILETSAKSFFLSSDVAHAVHPNYANKYESQHKPLLGGGPVIKINANQRYMTNSPGLVLVKRLAEAAKVPLQLFVVANDSPCGSTIGPILASKTGIRTLDLGNPVLSMHSIRETGGSADLEFQIKLFKEFFERYTSIESEIVV</sequence>